<protein>
    <recommendedName>
        <fullName evidence="1">Large ribosomal subunit protein bL9</fullName>
    </recommendedName>
    <alternativeName>
        <fullName evidence="2">50S ribosomal protein L9</fullName>
    </alternativeName>
</protein>
<proteinExistence type="inferred from homology"/>
<reference key="1">
    <citation type="journal article" date="2006" name="Proc. Natl. Acad. Sci. U.S.A.">
        <title>Comparative genomics of the lactic acid bacteria.</title>
        <authorList>
            <person name="Makarova K.S."/>
            <person name="Slesarev A."/>
            <person name="Wolf Y.I."/>
            <person name="Sorokin A."/>
            <person name="Mirkin B."/>
            <person name="Koonin E.V."/>
            <person name="Pavlov A."/>
            <person name="Pavlova N."/>
            <person name="Karamychev V."/>
            <person name="Polouchine N."/>
            <person name="Shakhova V."/>
            <person name="Grigoriev I."/>
            <person name="Lou Y."/>
            <person name="Rohksar D."/>
            <person name="Lucas S."/>
            <person name="Huang K."/>
            <person name="Goodstein D.M."/>
            <person name="Hawkins T."/>
            <person name="Plengvidhya V."/>
            <person name="Welker D."/>
            <person name="Hughes J."/>
            <person name="Goh Y."/>
            <person name="Benson A."/>
            <person name="Baldwin K."/>
            <person name="Lee J.-H."/>
            <person name="Diaz-Muniz I."/>
            <person name="Dosti B."/>
            <person name="Smeianov V."/>
            <person name="Wechter W."/>
            <person name="Barabote R."/>
            <person name="Lorca G."/>
            <person name="Altermann E."/>
            <person name="Barrangou R."/>
            <person name="Ganesan B."/>
            <person name="Xie Y."/>
            <person name="Rawsthorne H."/>
            <person name="Tamir D."/>
            <person name="Parker C."/>
            <person name="Breidt F."/>
            <person name="Broadbent J.R."/>
            <person name="Hutkins R."/>
            <person name="O'Sullivan D."/>
            <person name="Steele J."/>
            <person name="Unlu G."/>
            <person name="Saier M.H. Jr."/>
            <person name="Klaenhammer T."/>
            <person name="Richardson P."/>
            <person name="Kozyavkin S."/>
            <person name="Weimer B.C."/>
            <person name="Mills D.A."/>
        </authorList>
    </citation>
    <scope>NUCLEOTIDE SEQUENCE [LARGE SCALE GENOMIC DNA]</scope>
    <source>
        <strain>ATCC 8293 / DSM 20343 / BCRC 11652 / CCM 1803 / JCM 6124 / NCDO 523 / NBRC 100496 / NCIMB 8023 / NCTC 12954 / NRRL B-1118 / 37Y</strain>
    </source>
</reference>
<keyword id="KW-1185">Reference proteome</keyword>
<keyword id="KW-0687">Ribonucleoprotein</keyword>
<keyword id="KW-0689">Ribosomal protein</keyword>
<keyword id="KW-0694">RNA-binding</keyword>
<keyword id="KW-0699">rRNA-binding</keyword>
<accession>Q03UT5</accession>
<organism>
    <name type="scientific">Leuconostoc mesenteroides subsp. mesenteroides (strain ATCC 8293 / DSM 20343 / BCRC 11652 / CCM 1803 / JCM 6124 / NCDO 523 / NBRC 100496 / NCIMB 8023 / NCTC 12954 / NRRL B-1118 / 37Y)</name>
    <dbReference type="NCBI Taxonomy" id="203120"/>
    <lineage>
        <taxon>Bacteria</taxon>
        <taxon>Bacillati</taxon>
        <taxon>Bacillota</taxon>
        <taxon>Bacilli</taxon>
        <taxon>Lactobacillales</taxon>
        <taxon>Lactobacillaceae</taxon>
        <taxon>Leuconostoc</taxon>
    </lineage>
</organism>
<gene>
    <name evidence="1" type="primary">rplI</name>
    <name type="ordered locus">LEUM_1966</name>
</gene>
<dbReference type="EMBL" id="CP000414">
    <property type="protein sequence ID" value="ABJ63037.1"/>
    <property type="molecule type" value="Genomic_DNA"/>
</dbReference>
<dbReference type="RefSeq" id="WP_011680501.1">
    <property type="nucleotide sequence ID" value="NC_008531.1"/>
</dbReference>
<dbReference type="SMR" id="Q03UT5"/>
<dbReference type="EnsemblBacteria" id="ABJ63037">
    <property type="protein sequence ID" value="ABJ63037"/>
    <property type="gene ID" value="LEUM_1966"/>
</dbReference>
<dbReference type="GeneID" id="29576303"/>
<dbReference type="KEGG" id="lme:LEUM_1966"/>
<dbReference type="eggNOG" id="COG0359">
    <property type="taxonomic scope" value="Bacteria"/>
</dbReference>
<dbReference type="HOGENOM" id="CLU_078938_3_2_9"/>
<dbReference type="Proteomes" id="UP000000362">
    <property type="component" value="Chromosome"/>
</dbReference>
<dbReference type="GO" id="GO:1990904">
    <property type="term" value="C:ribonucleoprotein complex"/>
    <property type="evidence" value="ECO:0007669"/>
    <property type="project" value="UniProtKB-KW"/>
</dbReference>
<dbReference type="GO" id="GO:0005840">
    <property type="term" value="C:ribosome"/>
    <property type="evidence" value="ECO:0007669"/>
    <property type="project" value="UniProtKB-KW"/>
</dbReference>
<dbReference type="GO" id="GO:0019843">
    <property type="term" value="F:rRNA binding"/>
    <property type="evidence" value="ECO:0007669"/>
    <property type="project" value="UniProtKB-UniRule"/>
</dbReference>
<dbReference type="GO" id="GO:0003735">
    <property type="term" value="F:structural constituent of ribosome"/>
    <property type="evidence" value="ECO:0007669"/>
    <property type="project" value="InterPro"/>
</dbReference>
<dbReference type="GO" id="GO:0006412">
    <property type="term" value="P:translation"/>
    <property type="evidence" value="ECO:0007669"/>
    <property type="project" value="UniProtKB-UniRule"/>
</dbReference>
<dbReference type="FunFam" id="3.10.430.100:FF:000002">
    <property type="entry name" value="50S ribosomal protein L9"/>
    <property type="match status" value="1"/>
</dbReference>
<dbReference type="FunFam" id="3.40.5.10:FF:000002">
    <property type="entry name" value="50S ribosomal protein L9"/>
    <property type="match status" value="1"/>
</dbReference>
<dbReference type="Gene3D" id="3.10.430.100">
    <property type="entry name" value="Ribosomal protein L9, C-terminal domain"/>
    <property type="match status" value="1"/>
</dbReference>
<dbReference type="Gene3D" id="3.40.5.10">
    <property type="entry name" value="Ribosomal protein L9, N-terminal domain"/>
    <property type="match status" value="1"/>
</dbReference>
<dbReference type="HAMAP" id="MF_00503">
    <property type="entry name" value="Ribosomal_bL9"/>
    <property type="match status" value="1"/>
</dbReference>
<dbReference type="InterPro" id="IPR000244">
    <property type="entry name" value="Ribosomal_bL9"/>
</dbReference>
<dbReference type="InterPro" id="IPR009027">
    <property type="entry name" value="Ribosomal_bL9/RNase_H1_N"/>
</dbReference>
<dbReference type="InterPro" id="IPR020594">
    <property type="entry name" value="Ribosomal_bL9_bac/chp"/>
</dbReference>
<dbReference type="InterPro" id="IPR020069">
    <property type="entry name" value="Ribosomal_bL9_C"/>
</dbReference>
<dbReference type="InterPro" id="IPR036791">
    <property type="entry name" value="Ribosomal_bL9_C_sf"/>
</dbReference>
<dbReference type="InterPro" id="IPR020070">
    <property type="entry name" value="Ribosomal_bL9_N"/>
</dbReference>
<dbReference type="InterPro" id="IPR036935">
    <property type="entry name" value="Ribosomal_bL9_N_sf"/>
</dbReference>
<dbReference type="NCBIfam" id="TIGR00158">
    <property type="entry name" value="L9"/>
    <property type="match status" value="1"/>
</dbReference>
<dbReference type="PANTHER" id="PTHR21368">
    <property type="entry name" value="50S RIBOSOMAL PROTEIN L9"/>
    <property type="match status" value="1"/>
</dbReference>
<dbReference type="Pfam" id="PF03948">
    <property type="entry name" value="Ribosomal_L9_C"/>
    <property type="match status" value="1"/>
</dbReference>
<dbReference type="Pfam" id="PF01281">
    <property type="entry name" value="Ribosomal_L9_N"/>
    <property type="match status" value="1"/>
</dbReference>
<dbReference type="SUPFAM" id="SSF55658">
    <property type="entry name" value="L9 N-domain-like"/>
    <property type="match status" value="1"/>
</dbReference>
<dbReference type="SUPFAM" id="SSF55653">
    <property type="entry name" value="Ribosomal protein L9 C-domain"/>
    <property type="match status" value="1"/>
</dbReference>
<dbReference type="PROSITE" id="PS00651">
    <property type="entry name" value="RIBOSOMAL_L9"/>
    <property type="match status" value="1"/>
</dbReference>
<comment type="function">
    <text evidence="1">Binds to the 23S rRNA.</text>
</comment>
<comment type="similarity">
    <text evidence="1">Belongs to the bacterial ribosomal protein bL9 family.</text>
</comment>
<name>RL9_LEUMM</name>
<feature type="chain" id="PRO_1000014803" description="Large ribosomal subunit protein bL9">
    <location>
        <begin position="1"/>
        <end position="150"/>
    </location>
</feature>
<sequence length="150" mass="16487">MKVVFLEDVKGRGKKGEIKEVPDGYANNFLIKNKKAEPATGKNLGAVKGRQKAEEKAAAEELAEARKLADFFANEKTVVELTGKSGTDGRLFGAVSTKQIAAALEKQYQIKIDKRKMELNQPIHALGYTDVPVKLHREVTAQLRVHVSEG</sequence>
<evidence type="ECO:0000255" key="1">
    <source>
        <dbReference type="HAMAP-Rule" id="MF_00503"/>
    </source>
</evidence>
<evidence type="ECO:0000305" key="2"/>